<protein>
    <recommendedName>
        <fullName>UPF0561 protein C2orf68</fullName>
    </recommendedName>
</protein>
<comment type="interaction">
    <interactant intactId="EBI-11603468">
        <id>Q2NKX9</id>
    </interactant>
    <interactant intactId="EBI-4400025">
        <id>Q9Y2T1</id>
        <label>AXIN2</label>
    </interactant>
    <organismsDiffer>false</organismsDiffer>
    <experiments>3</experiments>
</comment>
<comment type="interaction">
    <interactant intactId="EBI-11603468">
        <id>Q2NKX9</id>
    </interactant>
    <interactant intactId="EBI-1048743">
        <id>Q9NX55</id>
        <label>HYPK</label>
    </interactant>
    <organismsDiffer>false</organismsDiffer>
    <experiments>5</experiments>
</comment>
<comment type="interaction">
    <interactant intactId="EBI-11603468">
        <id>Q2NKX9</id>
    </interactant>
    <interactant intactId="EBI-2556193">
        <id>Q63ZY3</id>
        <label>KANK2</label>
    </interactant>
    <organismsDiffer>false</organismsDiffer>
    <experiments>3</experiments>
</comment>
<comment type="interaction">
    <interactant intactId="EBI-11603468">
        <id>Q2NKX9</id>
    </interactant>
    <interactant intactId="EBI-751001">
        <id>Q14145</id>
        <label>KEAP1</label>
    </interactant>
    <organismsDiffer>false</organismsDiffer>
    <experiments>3</experiments>
</comment>
<comment type="interaction">
    <interactant intactId="EBI-11603468">
        <id>Q2NKX9</id>
    </interactant>
    <interactant intactId="EBI-10171697">
        <id>Q6A162</id>
        <label>KRT40</label>
    </interactant>
    <organismsDiffer>false</organismsDiffer>
    <experiments>3</experiments>
</comment>
<comment type="interaction">
    <interactant intactId="EBI-11603468">
        <id>Q2NKX9</id>
    </interactant>
    <interactant intactId="EBI-11749135">
        <id>Q8IUG1</id>
        <label>KRTAP1-3</label>
    </interactant>
    <organismsDiffer>false</organismsDiffer>
    <experiments>3</experiments>
</comment>
<comment type="interaction">
    <interactant intactId="EBI-11603468">
        <id>Q2NKX9</id>
    </interactant>
    <interactant intactId="EBI-10171774">
        <id>P60410</id>
        <label>KRTAP10-8</label>
    </interactant>
    <organismsDiffer>false</organismsDiffer>
    <experiments>3</experiments>
</comment>
<comment type="interaction">
    <interactant intactId="EBI-11603468">
        <id>Q2NKX9</id>
    </interactant>
    <interactant intactId="EBI-743796">
        <id>Q8TBN0</id>
        <label>RAB3IL1</label>
    </interactant>
    <organismsDiffer>false</organismsDiffer>
    <experiments>3</experiments>
</comment>
<comment type="interaction">
    <interactant intactId="EBI-11603468">
        <id>Q2NKX9</id>
    </interactant>
    <interactant intactId="EBI-12372219">
        <id>O15304-2</id>
        <label>SIVA1</label>
    </interactant>
    <organismsDiffer>false</organismsDiffer>
    <experiments>7</experiments>
</comment>
<comment type="interaction">
    <interactant intactId="EBI-11603468">
        <id>Q2NKX9</id>
    </interactant>
    <interactant intactId="EBI-5235340">
        <id>Q7Z699</id>
        <label>SPRED1</label>
    </interactant>
    <organismsDiffer>false</organismsDiffer>
    <experiments>3</experiments>
</comment>
<comment type="interaction">
    <interactant intactId="EBI-11603468">
        <id>Q2NKX9</id>
    </interactant>
    <interactant intactId="EBI-746692">
        <id>P19237</id>
        <label>TNNI1</label>
    </interactant>
    <organismsDiffer>false</organismsDiffer>
    <experiments>3</experiments>
</comment>
<comment type="interaction">
    <interactant intactId="EBI-11603468">
        <id>Q2NKX9</id>
    </interactant>
    <interactant intactId="EBI-10176632">
        <id>O43829</id>
        <label>ZBTB14</label>
    </interactant>
    <organismsDiffer>false</organismsDiffer>
    <experiments>3</experiments>
</comment>
<comment type="alternative products">
    <event type="alternative splicing"/>
    <isoform>
        <id>Q2NKX9-1</id>
        <name>1</name>
        <sequence type="displayed"/>
    </isoform>
    <isoform>
        <id>Q2NKX9-3</id>
        <name>2</name>
        <sequence type="described" ref="VSP_032792 VSP_032793"/>
    </isoform>
</comment>
<comment type="similarity">
    <text evidence="3">Belongs to the UPF0561 family.</text>
</comment>
<sequence length="166" mass="18751">MEAGPHPRPGHCCKPGGRLDMNHGFVHHIRRNQIARDDYDKKVKQAAKEKVRRRHTPAPTRPRKPDLQVYLPRHRDVSAHPRNPDYEESGESSSSGGSELEPSGHQLFCLEYEADSGEVTSVIVYQGDDPGKVSEKVSAHTPLDPPMREALKLRIQEEIAKRQSQH</sequence>
<keyword id="KW-0025">Alternative splicing</keyword>
<keyword id="KW-1267">Proteomics identification</keyword>
<keyword id="KW-1185">Reference proteome</keyword>
<evidence type="ECO:0000256" key="1">
    <source>
        <dbReference type="SAM" id="MobiDB-lite"/>
    </source>
</evidence>
<evidence type="ECO:0000303" key="2">
    <source>
    </source>
</evidence>
<evidence type="ECO:0000305" key="3"/>
<reference key="1">
    <citation type="journal article" date="2004" name="Nat. Genet.">
        <title>Complete sequencing and characterization of 21,243 full-length human cDNAs.</title>
        <authorList>
            <person name="Ota T."/>
            <person name="Suzuki Y."/>
            <person name="Nishikawa T."/>
            <person name="Otsuki T."/>
            <person name="Sugiyama T."/>
            <person name="Irie R."/>
            <person name="Wakamatsu A."/>
            <person name="Hayashi K."/>
            <person name="Sato H."/>
            <person name="Nagai K."/>
            <person name="Kimura K."/>
            <person name="Makita H."/>
            <person name="Sekine M."/>
            <person name="Obayashi M."/>
            <person name="Nishi T."/>
            <person name="Shibahara T."/>
            <person name="Tanaka T."/>
            <person name="Ishii S."/>
            <person name="Yamamoto J."/>
            <person name="Saito K."/>
            <person name="Kawai Y."/>
            <person name="Isono Y."/>
            <person name="Nakamura Y."/>
            <person name="Nagahari K."/>
            <person name="Murakami K."/>
            <person name="Yasuda T."/>
            <person name="Iwayanagi T."/>
            <person name="Wagatsuma M."/>
            <person name="Shiratori A."/>
            <person name="Sudo H."/>
            <person name="Hosoiri T."/>
            <person name="Kaku Y."/>
            <person name="Kodaira H."/>
            <person name="Kondo H."/>
            <person name="Sugawara M."/>
            <person name="Takahashi M."/>
            <person name="Kanda K."/>
            <person name="Yokoi T."/>
            <person name="Furuya T."/>
            <person name="Kikkawa E."/>
            <person name="Omura Y."/>
            <person name="Abe K."/>
            <person name="Kamihara K."/>
            <person name="Katsuta N."/>
            <person name="Sato K."/>
            <person name="Tanikawa M."/>
            <person name="Yamazaki M."/>
            <person name="Ninomiya K."/>
            <person name="Ishibashi T."/>
            <person name="Yamashita H."/>
            <person name="Murakawa K."/>
            <person name="Fujimori K."/>
            <person name="Tanai H."/>
            <person name="Kimata M."/>
            <person name="Watanabe M."/>
            <person name="Hiraoka S."/>
            <person name="Chiba Y."/>
            <person name="Ishida S."/>
            <person name="Ono Y."/>
            <person name="Takiguchi S."/>
            <person name="Watanabe S."/>
            <person name="Yosida M."/>
            <person name="Hotuta T."/>
            <person name="Kusano J."/>
            <person name="Kanehori K."/>
            <person name="Takahashi-Fujii A."/>
            <person name="Hara H."/>
            <person name="Tanase T.-O."/>
            <person name="Nomura Y."/>
            <person name="Togiya S."/>
            <person name="Komai F."/>
            <person name="Hara R."/>
            <person name="Takeuchi K."/>
            <person name="Arita M."/>
            <person name="Imose N."/>
            <person name="Musashino K."/>
            <person name="Yuuki H."/>
            <person name="Oshima A."/>
            <person name="Sasaki N."/>
            <person name="Aotsuka S."/>
            <person name="Yoshikawa Y."/>
            <person name="Matsunawa H."/>
            <person name="Ichihara T."/>
            <person name="Shiohata N."/>
            <person name="Sano S."/>
            <person name="Moriya S."/>
            <person name="Momiyama H."/>
            <person name="Satoh N."/>
            <person name="Takami S."/>
            <person name="Terashima Y."/>
            <person name="Suzuki O."/>
            <person name="Nakagawa S."/>
            <person name="Senoh A."/>
            <person name="Mizoguchi H."/>
            <person name="Goto Y."/>
            <person name="Shimizu F."/>
            <person name="Wakebe H."/>
            <person name="Hishigaki H."/>
            <person name="Watanabe T."/>
            <person name="Sugiyama A."/>
            <person name="Takemoto M."/>
            <person name="Kawakami B."/>
            <person name="Yamazaki M."/>
            <person name="Watanabe K."/>
            <person name="Kumagai A."/>
            <person name="Itakura S."/>
            <person name="Fukuzumi Y."/>
            <person name="Fujimori Y."/>
            <person name="Komiyama M."/>
            <person name="Tashiro H."/>
            <person name="Tanigami A."/>
            <person name="Fujiwara T."/>
            <person name="Ono T."/>
            <person name="Yamada K."/>
            <person name="Fujii Y."/>
            <person name="Ozaki K."/>
            <person name="Hirao M."/>
            <person name="Ohmori Y."/>
            <person name="Kawabata A."/>
            <person name="Hikiji T."/>
            <person name="Kobatake N."/>
            <person name="Inagaki H."/>
            <person name="Ikema Y."/>
            <person name="Okamoto S."/>
            <person name="Okitani R."/>
            <person name="Kawakami T."/>
            <person name="Noguchi S."/>
            <person name="Itoh T."/>
            <person name="Shigeta K."/>
            <person name="Senba T."/>
            <person name="Matsumura K."/>
            <person name="Nakajima Y."/>
            <person name="Mizuno T."/>
            <person name="Morinaga M."/>
            <person name="Sasaki M."/>
            <person name="Togashi T."/>
            <person name="Oyama M."/>
            <person name="Hata H."/>
            <person name="Watanabe M."/>
            <person name="Komatsu T."/>
            <person name="Mizushima-Sugano J."/>
            <person name="Satoh T."/>
            <person name="Shirai Y."/>
            <person name="Takahashi Y."/>
            <person name="Nakagawa K."/>
            <person name="Okumura K."/>
            <person name="Nagase T."/>
            <person name="Nomura N."/>
            <person name="Kikuchi H."/>
            <person name="Masuho Y."/>
            <person name="Yamashita R."/>
            <person name="Nakai K."/>
            <person name="Yada T."/>
            <person name="Nakamura Y."/>
            <person name="Ohara O."/>
            <person name="Isogai T."/>
            <person name="Sugano S."/>
        </authorList>
    </citation>
    <scope>NUCLEOTIDE SEQUENCE [LARGE SCALE MRNA] (ISOFORMS 1 AND 2)</scope>
    <source>
        <tissue>Caudate nucleus</tissue>
    </source>
</reference>
<reference key="2">
    <citation type="submission" date="2005-09" db="EMBL/GenBank/DDBJ databases">
        <authorList>
            <person name="Mural R.J."/>
            <person name="Istrail S."/>
            <person name="Sutton G.G."/>
            <person name="Florea L."/>
            <person name="Halpern A.L."/>
            <person name="Mobarry C.M."/>
            <person name="Lippert R."/>
            <person name="Walenz B."/>
            <person name="Shatkay H."/>
            <person name="Dew I."/>
            <person name="Miller J.R."/>
            <person name="Flanigan M.J."/>
            <person name="Edwards N.J."/>
            <person name="Bolanos R."/>
            <person name="Fasulo D."/>
            <person name="Halldorsson B.V."/>
            <person name="Hannenhalli S."/>
            <person name="Turner R."/>
            <person name="Yooseph S."/>
            <person name="Lu F."/>
            <person name="Nusskern D.R."/>
            <person name="Shue B.C."/>
            <person name="Zheng X.H."/>
            <person name="Zhong F."/>
            <person name="Delcher A.L."/>
            <person name="Huson D.H."/>
            <person name="Kravitz S.A."/>
            <person name="Mouchard L."/>
            <person name="Reinert K."/>
            <person name="Remington K.A."/>
            <person name="Clark A.G."/>
            <person name="Waterman M.S."/>
            <person name="Eichler E.E."/>
            <person name="Adams M.D."/>
            <person name="Hunkapiller M.W."/>
            <person name="Myers E.W."/>
            <person name="Venter J.C."/>
        </authorList>
    </citation>
    <scope>NUCLEOTIDE SEQUENCE [LARGE SCALE GENOMIC DNA]</scope>
</reference>
<reference key="3">
    <citation type="journal article" date="2004" name="Genome Res.">
        <title>The status, quality, and expansion of the NIH full-length cDNA project: the Mammalian Gene Collection (MGC).</title>
        <authorList>
            <consortium name="The MGC Project Team"/>
        </authorList>
    </citation>
    <scope>NUCLEOTIDE SEQUENCE [LARGE SCALE MRNA] (ISOFORM 1)</scope>
    <source>
        <tissue>Lung</tissue>
    </source>
</reference>
<dbReference type="EMBL" id="AK124808">
    <property type="protein sequence ID" value="BAC85956.1"/>
    <property type="molecule type" value="mRNA"/>
</dbReference>
<dbReference type="EMBL" id="AK300003">
    <property type="protein sequence ID" value="BAG61822.1"/>
    <property type="molecule type" value="mRNA"/>
</dbReference>
<dbReference type="EMBL" id="CH471053">
    <property type="protein sequence ID" value="EAW99495.1"/>
    <property type="molecule type" value="Genomic_DNA"/>
</dbReference>
<dbReference type="EMBL" id="BC111483">
    <property type="protein sequence ID" value="AAI11484.1"/>
    <property type="molecule type" value="mRNA"/>
</dbReference>
<dbReference type="CCDS" id="CCDS42704.1">
    <molecule id="Q2NKX9-1"/>
</dbReference>
<dbReference type="RefSeq" id="NP_001013671.2">
    <molecule id="Q2NKX9-1"/>
    <property type="nucleotide sequence ID" value="NM_001013649.4"/>
</dbReference>
<dbReference type="SMR" id="Q2NKX9"/>
<dbReference type="BioGRID" id="132926">
    <property type="interactions" value="37"/>
</dbReference>
<dbReference type="FunCoup" id="Q2NKX9">
    <property type="interactions" value="868"/>
</dbReference>
<dbReference type="IntAct" id="Q2NKX9">
    <property type="interactions" value="23"/>
</dbReference>
<dbReference type="STRING" id="9606.ENSP00000304410"/>
<dbReference type="iPTMnet" id="Q2NKX9"/>
<dbReference type="PhosphoSitePlus" id="Q2NKX9"/>
<dbReference type="BioMuta" id="C2orf68"/>
<dbReference type="DMDM" id="121941598"/>
<dbReference type="jPOST" id="Q2NKX9"/>
<dbReference type="MassIVE" id="Q2NKX9"/>
<dbReference type="PaxDb" id="9606-ENSP00000304410"/>
<dbReference type="PeptideAtlas" id="Q2NKX9"/>
<dbReference type="ProteomicsDB" id="61415">
    <molecule id="Q2NKX9-1"/>
</dbReference>
<dbReference type="ProteomicsDB" id="61416">
    <molecule id="Q2NKX9-3"/>
</dbReference>
<dbReference type="Pumba" id="Q2NKX9"/>
<dbReference type="Antibodypedia" id="31940">
    <property type="antibodies" value="37 antibodies from 11 providers"/>
</dbReference>
<dbReference type="DNASU" id="388969"/>
<dbReference type="Ensembl" id="ENST00000306336.6">
    <molecule id="Q2NKX9-1"/>
    <property type="protein sequence ID" value="ENSP00000304410.5"/>
    <property type="gene ID" value="ENSG00000168887.11"/>
</dbReference>
<dbReference type="Ensembl" id="ENST00000409734.3">
    <molecule id="Q2NKX9-3"/>
    <property type="protein sequence ID" value="ENSP00000386301.3"/>
    <property type="gene ID" value="ENSG00000168887.11"/>
</dbReference>
<dbReference type="GeneID" id="388969"/>
<dbReference type="KEGG" id="hsa:388969"/>
<dbReference type="MANE-Select" id="ENST00000306336.6">
    <property type="protein sequence ID" value="ENSP00000304410.5"/>
    <property type="RefSeq nucleotide sequence ID" value="NM_001013649.4"/>
    <property type="RefSeq protein sequence ID" value="NP_001013671.2"/>
</dbReference>
<dbReference type="UCSC" id="uc002sqc.3">
    <molecule id="Q2NKX9-1"/>
    <property type="organism name" value="human"/>
</dbReference>
<dbReference type="AGR" id="HGNC:34353"/>
<dbReference type="CTD" id="388969"/>
<dbReference type="DisGeNET" id="388969"/>
<dbReference type="GeneCards" id="C2orf68"/>
<dbReference type="HGNC" id="HGNC:34353">
    <property type="gene designation" value="C2orf68"/>
</dbReference>
<dbReference type="HPA" id="ENSG00000168887">
    <property type="expression patterns" value="Low tissue specificity"/>
</dbReference>
<dbReference type="MIM" id="618519">
    <property type="type" value="gene"/>
</dbReference>
<dbReference type="neXtProt" id="NX_Q2NKX9"/>
<dbReference type="OpenTargets" id="ENSG00000168887"/>
<dbReference type="PharmGKB" id="PA162379474"/>
<dbReference type="VEuPathDB" id="HostDB:ENSG00000168887"/>
<dbReference type="eggNOG" id="ENOG502S396">
    <property type="taxonomic scope" value="Eukaryota"/>
</dbReference>
<dbReference type="GeneTree" id="ENSGT00390000001901"/>
<dbReference type="HOGENOM" id="CLU_100251_0_0_1"/>
<dbReference type="InParanoid" id="Q2NKX9"/>
<dbReference type="OMA" id="FCLEYEG"/>
<dbReference type="OrthoDB" id="10033037at2759"/>
<dbReference type="PAN-GO" id="Q2NKX9">
    <property type="GO annotations" value="0 GO annotations based on evolutionary models"/>
</dbReference>
<dbReference type="PhylomeDB" id="Q2NKX9"/>
<dbReference type="TreeFam" id="TF328804"/>
<dbReference type="PathwayCommons" id="Q2NKX9"/>
<dbReference type="SignaLink" id="Q2NKX9"/>
<dbReference type="BioGRID-ORCS" id="388969">
    <property type="hits" value="30 hits in 1131 CRISPR screens"/>
</dbReference>
<dbReference type="ChiTaRS" id="C2orf68">
    <property type="organism name" value="human"/>
</dbReference>
<dbReference type="GenomeRNAi" id="388969"/>
<dbReference type="Pharos" id="Q2NKX9">
    <property type="development level" value="Tdark"/>
</dbReference>
<dbReference type="PRO" id="PR:Q2NKX9"/>
<dbReference type="Proteomes" id="UP000005640">
    <property type="component" value="Chromosome 2"/>
</dbReference>
<dbReference type="RNAct" id="Q2NKX9">
    <property type="molecule type" value="protein"/>
</dbReference>
<dbReference type="Bgee" id="ENSG00000168887">
    <property type="expression patterns" value="Expressed in hindlimb stylopod muscle and 202 other cell types or tissues"/>
</dbReference>
<dbReference type="ExpressionAtlas" id="Q2NKX9">
    <property type="expression patterns" value="baseline and differential"/>
</dbReference>
<dbReference type="InterPro" id="IPR018888">
    <property type="entry name" value="UPF0561"/>
</dbReference>
<dbReference type="PANTHER" id="PTHR34256">
    <property type="entry name" value="UPF0561 PROTEIN C2ORF68"/>
    <property type="match status" value="1"/>
</dbReference>
<dbReference type="PANTHER" id="PTHR34256:SF1">
    <property type="entry name" value="UPF0561 PROTEIN C2ORF68"/>
    <property type="match status" value="1"/>
</dbReference>
<dbReference type="Pfam" id="PF10573">
    <property type="entry name" value="UPF0561"/>
    <property type="match status" value="1"/>
</dbReference>
<proteinExistence type="evidence at protein level"/>
<accession>Q2NKX9</accession>
<accession>B4DT10</accession>
<accession>Q4G0J7</accession>
<accession>Q6ZVA6</accession>
<organism>
    <name type="scientific">Homo sapiens</name>
    <name type="common">Human</name>
    <dbReference type="NCBI Taxonomy" id="9606"/>
    <lineage>
        <taxon>Eukaryota</taxon>
        <taxon>Metazoa</taxon>
        <taxon>Chordata</taxon>
        <taxon>Craniata</taxon>
        <taxon>Vertebrata</taxon>
        <taxon>Euteleostomi</taxon>
        <taxon>Mammalia</taxon>
        <taxon>Eutheria</taxon>
        <taxon>Euarchontoglires</taxon>
        <taxon>Primates</taxon>
        <taxon>Haplorrhini</taxon>
        <taxon>Catarrhini</taxon>
        <taxon>Hominidae</taxon>
        <taxon>Homo</taxon>
    </lineage>
</organism>
<name>CB068_HUMAN</name>
<gene>
    <name type="primary">C2orf68</name>
</gene>
<feature type="chain" id="PRO_0000328785" description="UPF0561 protein C2orf68">
    <location>
        <begin position="1"/>
        <end position="166"/>
    </location>
</feature>
<feature type="region of interest" description="Disordered" evidence="1">
    <location>
        <begin position="32"/>
        <end position="107"/>
    </location>
</feature>
<feature type="compositionally biased region" description="Basic and acidic residues" evidence="1">
    <location>
        <begin position="34"/>
        <end position="49"/>
    </location>
</feature>
<feature type="compositionally biased region" description="Basic and acidic residues" evidence="1">
    <location>
        <begin position="73"/>
        <end position="85"/>
    </location>
</feature>
<feature type="compositionally biased region" description="Low complexity" evidence="1">
    <location>
        <begin position="91"/>
        <end position="104"/>
    </location>
</feature>
<feature type="splice variant" id="VSP_032792" description="In isoform 2." evidence="2">
    <original>DVSAHPRNPDYEESGESSSSGGSELEPSGHQLFCLEYEADSGEVTSVIVYQG</original>
    <variation>GEAARPACLQPARSSCNALPFSIGKNHFLLLRFSSSRLFPEPPPQRSQISAE</variation>
    <location>
        <begin position="76"/>
        <end position="127"/>
    </location>
</feature>
<feature type="splice variant" id="VSP_032793" description="In isoform 2." evidence="2">
    <location>
        <begin position="128"/>
        <end position="166"/>
    </location>
</feature>